<comment type="function">
    <text>Disrupting the ure2 operon has no effect on urease activity, or pathogen survival in BALB/c mice when inoculated by gavage, but confers slightly enhanced resistance to low pH killing in vitro.</text>
</comment>
<comment type="catalytic activity">
    <reaction evidence="1">
        <text>urea + 2 H2O + H(+) = hydrogencarbonate + 2 NH4(+)</text>
        <dbReference type="Rhea" id="RHEA:20557"/>
        <dbReference type="ChEBI" id="CHEBI:15377"/>
        <dbReference type="ChEBI" id="CHEBI:15378"/>
        <dbReference type="ChEBI" id="CHEBI:16199"/>
        <dbReference type="ChEBI" id="CHEBI:17544"/>
        <dbReference type="ChEBI" id="CHEBI:28938"/>
        <dbReference type="EC" id="3.5.1.5"/>
    </reaction>
</comment>
<comment type="pathway">
    <text evidence="1">Nitrogen metabolism; urea degradation; CO(2) and NH(3) from urea (urease route): step 1/1.</text>
</comment>
<comment type="subunit">
    <text evidence="1">Heterotrimer of UreA (gamma), UreB (beta) and UreC (alpha) subunits. Three heterotrimers associate to form the active enzyme.</text>
</comment>
<comment type="subcellular location">
    <subcellularLocation>
        <location evidence="1">Cytoplasm</location>
    </subcellularLocation>
</comment>
<comment type="similarity">
    <text evidence="1">Belongs to the urease gamma subunit family.</text>
</comment>
<proteinExistence type="inferred from homology"/>
<organism>
    <name type="scientific">Brucella suis biovar 1 (strain 1330)</name>
    <dbReference type="NCBI Taxonomy" id="204722"/>
    <lineage>
        <taxon>Bacteria</taxon>
        <taxon>Pseudomonadati</taxon>
        <taxon>Pseudomonadota</taxon>
        <taxon>Alphaproteobacteria</taxon>
        <taxon>Hyphomicrobiales</taxon>
        <taxon>Brucellaceae</taxon>
        <taxon>Brucella/Ochrobactrum group</taxon>
        <taxon>Brucella</taxon>
    </lineage>
</organism>
<evidence type="ECO:0000255" key="1">
    <source>
        <dbReference type="HAMAP-Rule" id="MF_00739"/>
    </source>
</evidence>
<accession>Q8FZW4</accession>
<accession>G0KB41</accession>
<sequence length="100" mass="10943">MHLTPREFDKLVIHMLSDVALKRKNKGLKLNHPEAVAVLSAYVLDGAREGKTVEEVMDGARSVLKADDVMDGVPDLLPLIQVEAVFSDGSRLVSLHNPIT</sequence>
<reference key="1">
    <citation type="journal article" date="2002" name="Proc. Natl. Acad. Sci. U.S.A.">
        <title>The Brucella suis genome reveals fundamental similarities between animal and plant pathogens and symbionts.</title>
        <authorList>
            <person name="Paulsen I.T."/>
            <person name="Seshadri R."/>
            <person name="Nelson K.E."/>
            <person name="Eisen J.A."/>
            <person name="Heidelberg J.F."/>
            <person name="Read T.D."/>
            <person name="Dodson R.J."/>
            <person name="Umayam L.A."/>
            <person name="Brinkac L.M."/>
            <person name="Beanan M.J."/>
            <person name="Daugherty S.C."/>
            <person name="DeBoy R.T."/>
            <person name="Durkin A.S."/>
            <person name="Kolonay J.F."/>
            <person name="Madupu R."/>
            <person name="Nelson W.C."/>
            <person name="Ayodeji B."/>
            <person name="Kraul M."/>
            <person name="Shetty J."/>
            <person name="Malek J.A."/>
            <person name="Van Aken S.E."/>
            <person name="Riedmuller S."/>
            <person name="Tettelin H."/>
            <person name="Gill S.R."/>
            <person name="White O."/>
            <person name="Salzberg S.L."/>
            <person name="Hoover D.L."/>
            <person name="Lindler L.E."/>
            <person name="Halling S.M."/>
            <person name="Boyle S.M."/>
            <person name="Fraser C.M."/>
        </authorList>
    </citation>
    <scope>NUCLEOTIDE SEQUENCE [LARGE SCALE GENOMIC DNA]</scope>
    <source>
        <strain>1330</strain>
    </source>
</reference>
<reference key="2">
    <citation type="journal article" date="2011" name="J. Bacteriol.">
        <title>Revised genome sequence of Brucella suis 1330.</title>
        <authorList>
            <person name="Tae H."/>
            <person name="Shallom S."/>
            <person name="Settlage R."/>
            <person name="Preston D."/>
            <person name="Adams L.G."/>
            <person name="Garner H.R."/>
        </authorList>
    </citation>
    <scope>NUCLEOTIDE SEQUENCE [LARGE SCALE GENOMIC DNA]</scope>
    <source>
        <strain>1330</strain>
    </source>
</reference>
<reference key="3">
    <citation type="journal article" date="2007" name="BMC Microbiol.">
        <title>Brucella suis urease encoded by ure1 but not ure2 is necessary for intestinal infection of BALB/c mice.</title>
        <authorList>
            <person name="Bandara A.B."/>
            <person name="Contreras A."/>
            <person name="Contreras-Rodriguez A."/>
            <person name="Martins A.M."/>
            <person name="Dobrean V."/>
            <person name="Poff-Reichow S."/>
            <person name="Rajasekaran P."/>
            <person name="Sriranganathan N."/>
            <person name="Schurig G.G."/>
            <person name="Boyle S.M."/>
        </authorList>
    </citation>
    <scope>OPERON DISRUPTION</scope>
    <scope>LACK OF ROLE IN VIRULENCE</scope>
    <source>
        <strain>1330</strain>
    </source>
</reference>
<name>URE32_BRUSU</name>
<dbReference type="EC" id="3.5.1.5" evidence="1"/>
<dbReference type="EMBL" id="AE014291">
    <property type="protein sequence ID" value="AAN30270.1"/>
    <property type="molecule type" value="Genomic_DNA"/>
</dbReference>
<dbReference type="EMBL" id="CP002997">
    <property type="protein sequence ID" value="AEM18687.1"/>
    <property type="molecule type" value="Genomic_DNA"/>
</dbReference>
<dbReference type="PIR" id="AC3333">
    <property type="entry name" value="AC3333"/>
</dbReference>
<dbReference type="RefSeq" id="WP_002964469.1">
    <property type="nucleotide sequence ID" value="NZ_KN046804.1"/>
</dbReference>
<dbReference type="SMR" id="Q8FZW4"/>
<dbReference type="KEGG" id="bms:BR1356"/>
<dbReference type="KEGG" id="bsi:BS1330_I1351"/>
<dbReference type="PATRIC" id="fig|204722.21.peg.830"/>
<dbReference type="HOGENOM" id="CLU_145825_1_0_5"/>
<dbReference type="UniPathway" id="UPA00258">
    <property type="reaction ID" value="UER00370"/>
</dbReference>
<dbReference type="Proteomes" id="UP000007104">
    <property type="component" value="Chromosome I"/>
</dbReference>
<dbReference type="GO" id="GO:0005737">
    <property type="term" value="C:cytoplasm"/>
    <property type="evidence" value="ECO:0007669"/>
    <property type="project" value="UniProtKB-SubCell"/>
</dbReference>
<dbReference type="GO" id="GO:0016151">
    <property type="term" value="F:nickel cation binding"/>
    <property type="evidence" value="ECO:0007669"/>
    <property type="project" value="InterPro"/>
</dbReference>
<dbReference type="GO" id="GO:0009039">
    <property type="term" value="F:urease activity"/>
    <property type="evidence" value="ECO:0007669"/>
    <property type="project" value="UniProtKB-UniRule"/>
</dbReference>
<dbReference type="GO" id="GO:0043419">
    <property type="term" value="P:urea catabolic process"/>
    <property type="evidence" value="ECO:0007669"/>
    <property type="project" value="UniProtKB-UniRule"/>
</dbReference>
<dbReference type="CDD" id="cd00390">
    <property type="entry name" value="Urease_gamma"/>
    <property type="match status" value="1"/>
</dbReference>
<dbReference type="Gene3D" id="3.30.280.10">
    <property type="entry name" value="Urease, gamma-like subunit"/>
    <property type="match status" value="1"/>
</dbReference>
<dbReference type="HAMAP" id="MF_00739">
    <property type="entry name" value="Urease_gamma"/>
    <property type="match status" value="1"/>
</dbReference>
<dbReference type="InterPro" id="IPR012010">
    <property type="entry name" value="Urease_gamma"/>
</dbReference>
<dbReference type="InterPro" id="IPR002026">
    <property type="entry name" value="Urease_gamma/gamma-beta_su"/>
</dbReference>
<dbReference type="InterPro" id="IPR036463">
    <property type="entry name" value="Urease_gamma_sf"/>
</dbReference>
<dbReference type="InterPro" id="IPR050069">
    <property type="entry name" value="Urease_subunit"/>
</dbReference>
<dbReference type="NCBIfam" id="NF009712">
    <property type="entry name" value="PRK13241.1"/>
    <property type="match status" value="1"/>
</dbReference>
<dbReference type="NCBIfam" id="TIGR00193">
    <property type="entry name" value="urease_gam"/>
    <property type="match status" value="1"/>
</dbReference>
<dbReference type="PANTHER" id="PTHR33569">
    <property type="entry name" value="UREASE"/>
    <property type="match status" value="1"/>
</dbReference>
<dbReference type="PANTHER" id="PTHR33569:SF1">
    <property type="entry name" value="UREASE"/>
    <property type="match status" value="1"/>
</dbReference>
<dbReference type="Pfam" id="PF00547">
    <property type="entry name" value="Urease_gamma"/>
    <property type="match status" value="1"/>
</dbReference>
<dbReference type="PIRSF" id="PIRSF001223">
    <property type="entry name" value="Urease_gamma"/>
    <property type="match status" value="1"/>
</dbReference>
<dbReference type="SUPFAM" id="SSF54111">
    <property type="entry name" value="Urease, gamma-subunit"/>
    <property type="match status" value="1"/>
</dbReference>
<keyword id="KW-0963">Cytoplasm</keyword>
<keyword id="KW-0378">Hydrolase</keyword>
<gene>
    <name evidence="1" type="primary">ureA2</name>
    <name type="synonym">ureA-2</name>
    <name type="ordered locus">BR1356</name>
    <name type="ordered locus">BS1330_I1351</name>
</gene>
<feature type="chain" id="PRO_0000098004" description="Urease subunit gamma 2">
    <location>
        <begin position="1"/>
        <end position="100"/>
    </location>
</feature>
<protein>
    <recommendedName>
        <fullName evidence="1">Urease subunit gamma 2</fullName>
        <ecNumber evidence="1">3.5.1.5</ecNumber>
    </recommendedName>
    <alternativeName>
        <fullName evidence="1">Urea amidohydrolase subunit gamma 2</fullName>
    </alternativeName>
</protein>